<keyword id="KW-0002">3D-structure</keyword>
<keyword id="KW-1003">Cell membrane</keyword>
<keyword id="KW-0175">Coiled coil</keyword>
<keyword id="KW-0903">Direct protein sequencing</keyword>
<keyword id="KW-0325">Glycoprotein</keyword>
<keyword id="KW-0407">Ion channel</keyword>
<keyword id="KW-0406">Ion transport</keyword>
<keyword id="KW-0472">Membrane</keyword>
<keyword id="KW-1185">Reference proteome</keyword>
<keyword id="KW-0716">Sensory transduction</keyword>
<keyword id="KW-0812">Transmembrane</keyword>
<keyword id="KW-1133">Transmembrane helix</keyword>
<keyword id="KW-0813">Transport</keyword>
<dbReference type="EMBL" id="AF481480">
    <property type="protein sequence ID" value="AAL79553.1"/>
    <property type="molecule type" value="mRNA"/>
</dbReference>
<dbReference type="EMBL" id="AY095352">
    <property type="protein sequence ID" value="AAM23261.1"/>
    <property type="molecule type" value="mRNA"/>
</dbReference>
<dbReference type="EMBL" id="AC087780">
    <property type="status" value="NOT_ANNOTATED_CDS"/>
    <property type="molecule type" value="Genomic_DNA"/>
</dbReference>
<dbReference type="EMBL" id="AC102505">
    <property type="status" value="NOT_ANNOTATED_CDS"/>
    <property type="molecule type" value="Genomic_DNA"/>
</dbReference>
<dbReference type="EMBL" id="CH466520">
    <property type="protein sequence ID" value="EDL40112.1"/>
    <property type="molecule type" value="Genomic_DNA"/>
</dbReference>
<dbReference type="EMBL" id="BC117934">
    <property type="protein sequence ID" value="AAI17935.1"/>
    <property type="molecule type" value="mRNA"/>
</dbReference>
<dbReference type="CCDS" id="CCDS48316.1"/>
<dbReference type="RefSeq" id="NP_599013.1">
    <property type="nucleotide sequence ID" value="NM_134252.5"/>
</dbReference>
<dbReference type="RefSeq" id="XP_006529288.1">
    <property type="nucleotide sequence ID" value="XM_006529225.2"/>
</dbReference>
<dbReference type="RefSeq" id="XP_006529289.1">
    <property type="nucleotide sequence ID" value="XM_006529226.2"/>
</dbReference>
<dbReference type="PDB" id="7WRA">
    <property type="method" value="EM"/>
    <property type="resolution" value="2.98 A"/>
    <property type="chains" value="A/B/C/D=1-1104"/>
</dbReference>
<dbReference type="PDB" id="7WRB">
    <property type="method" value="EM"/>
    <property type="resolution" value="2.88 A"/>
    <property type="chains" value="A/B/C/D=1-1104"/>
</dbReference>
<dbReference type="PDB" id="7WRC">
    <property type="method" value="EM"/>
    <property type="resolution" value="3.21 A"/>
    <property type="chains" value="A/B/C/D=1-1104"/>
</dbReference>
<dbReference type="PDB" id="7WRD">
    <property type="method" value="EM"/>
    <property type="resolution" value="2.98 A"/>
    <property type="chains" value="A/B/C/D=1-1104"/>
</dbReference>
<dbReference type="PDB" id="7WRE">
    <property type="method" value="EM"/>
    <property type="resolution" value="2.52 A"/>
    <property type="chains" value="A/B/C/D=1-1104"/>
</dbReference>
<dbReference type="PDB" id="7WRF">
    <property type="method" value="EM"/>
    <property type="resolution" value="3.04 A"/>
    <property type="chains" value="A/B/C/D=1-1104"/>
</dbReference>
<dbReference type="PDB" id="8E4L">
    <property type="method" value="EM"/>
    <property type="resolution" value="3.32 A"/>
    <property type="chains" value="A/B/C/D=2-1104"/>
</dbReference>
<dbReference type="PDB" id="8E4M">
    <property type="method" value="EM"/>
    <property type="resolution" value="3.44 A"/>
    <property type="chains" value="A/B/C/D=2-1104"/>
</dbReference>
<dbReference type="PDB" id="8E4N">
    <property type="method" value="EM"/>
    <property type="resolution" value="3.07 A"/>
    <property type="chains" value="A/B/C/D=2-1104"/>
</dbReference>
<dbReference type="PDB" id="8E4O">
    <property type="method" value="EM"/>
    <property type="resolution" value="3.43 A"/>
    <property type="chains" value="A/B/C/D=2-1104"/>
</dbReference>
<dbReference type="PDB" id="8E4P">
    <property type="method" value="EM"/>
    <property type="resolution" value="3.59 A"/>
    <property type="chains" value="A/B/C/D=2-1104"/>
</dbReference>
<dbReference type="PDB" id="9B6D">
    <property type="method" value="EM"/>
    <property type="resolution" value="3.30 A"/>
    <property type="chains" value="A/B/C/D=2-1104"/>
</dbReference>
<dbReference type="PDB" id="9B6E">
    <property type="method" value="EM"/>
    <property type="resolution" value="2.91 A"/>
    <property type="chains" value="A/B/C/D=2-1104"/>
</dbReference>
<dbReference type="PDB" id="9B6F">
    <property type="method" value="EM"/>
    <property type="resolution" value="3.42 A"/>
    <property type="chains" value="A/B/C/D=2-1104"/>
</dbReference>
<dbReference type="PDB" id="9B6G">
    <property type="method" value="EM"/>
    <property type="resolution" value="2.81 A"/>
    <property type="chains" value="A/B/C/D=2-1104"/>
</dbReference>
<dbReference type="PDB" id="9B6H">
    <property type="method" value="EM"/>
    <property type="resolution" value="2.76 A"/>
    <property type="chains" value="A/B/C/D=2-1104"/>
</dbReference>
<dbReference type="PDB" id="9B6J">
    <property type="method" value="EM"/>
    <property type="resolution" value="3.53 A"/>
    <property type="chains" value="A/B/C/D=2-1104"/>
</dbReference>
<dbReference type="PDB" id="9B6K">
    <property type="method" value="EM"/>
    <property type="resolution" value="4.13 A"/>
    <property type="chains" value="A/B/C/D=2-1104"/>
</dbReference>
<dbReference type="PDBsum" id="7WRA"/>
<dbReference type="PDBsum" id="7WRB"/>
<dbReference type="PDBsum" id="7WRC"/>
<dbReference type="PDBsum" id="7WRD"/>
<dbReference type="PDBsum" id="7WRE"/>
<dbReference type="PDBsum" id="7WRF"/>
<dbReference type="PDBsum" id="8E4L"/>
<dbReference type="PDBsum" id="8E4M"/>
<dbReference type="PDBsum" id="8E4N"/>
<dbReference type="PDBsum" id="8E4O"/>
<dbReference type="PDBsum" id="8E4P"/>
<dbReference type="PDBsum" id="9B6D"/>
<dbReference type="PDBsum" id="9B6E"/>
<dbReference type="PDBsum" id="9B6F"/>
<dbReference type="PDBsum" id="9B6G"/>
<dbReference type="PDBsum" id="9B6H"/>
<dbReference type="PDBsum" id="9B6J"/>
<dbReference type="PDBsum" id="9B6K"/>
<dbReference type="EMDB" id="EMD-27891"/>
<dbReference type="EMDB" id="EMD-27892"/>
<dbReference type="EMDB" id="EMD-27893"/>
<dbReference type="EMDB" id="EMD-27894"/>
<dbReference type="EMDB" id="EMD-27895"/>
<dbReference type="EMDB" id="EMD-32720"/>
<dbReference type="EMDB" id="EMD-32721"/>
<dbReference type="EMDB" id="EMD-32722"/>
<dbReference type="EMDB" id="EMD-32723"/>
<dbReference type="EMDB" id="EMD-32724"/>
<dbReference type="EMDB" id="EMD-32725"/>
<dbReference type="EMDB" id="EMD-44255"/>
<dbReference type="EMDB" id="EMD-44256"/>
<dbReference type="EMDB" id="EMD-44257"/>
<dbReference type="EMDB" id="EMD-44258"/>
<dbReference type="EMDB" id="EMD-44259"/>
<dbReference type="EMDB" id="EMD-44261"/>
<dbReference type="EMDB" id="EMD-44262"/>
<dbReference type="SMR" id="Q8R4D5"/>
<dbReference type="BioGRID" id="228590">
    <property type="interactions" value="1"/>
</dbReference>
<dbReference type="DIP" id="DIP-61852N"/>
<dbReference type="FunCoup" id="Q8R4D5">
    <property type="interactions" value="418"/>
</dbReference>
<dbReference type="IntAct" id="Q8R4D5">
    <property type="interactions" value="1"/>
</dbReference>
<dbReference type="STRING" id="10090.ENSMUSP00000036991"/>
<dbReference type="BindingDB" id="Q8R4D5"/>
<dbReference type="ChEMBL" id="CHEMBL3108632"/>
<dbReference type="DrugCentral" id="Q8R4D5"/>
<dbReference type="GuidetoPHARMACOLOGY" id="500"/>
<dbReference type="GlyCosmos" id="Q8R4D5">
    <property type="glycosylation" value="1 site, No reported glycans"/>
</dbReference>
<dbReference type="GlyGen" id="Q8R4D5">
    <property type="glycosylation" value="3 sites, 1 N-linked glycan (1 site)"/>
</dbReference>
<dbReference type="iPTMnet" id="Q8R4D5"/>
<dbReference type="PhosphoSitePlus" id="Q8R4D5"/>
<dbReference type="SwissPalm" id="Q8R4D5"/>
<dbReference type="PaxDb" id="10090-ENSMUSP00000036991"/>
<dbReference type="ProteomicsDB" id="300027"/>
<dbReference type="Antibodypedia" id="20244">
    <property type="antibodies" value="506 antibodies from 38 providers"/>
</dbReference>
<dbReference type="DNASU" id="171382"/>
<dbReference type="Ensembl" id="ENSMUST00000040210.14">
    <property type="protein sequence ID" value="ENSMUSP00000036991.8"/>
    <property type="gene ID" value="ENSMUSG00000036251.17"/>
</dbReference>
<dbReference type="Ensembl" id="ENSMUST00000113114.10">
    <property type="protein sequence ID" value="ENSMUSP00000108739.4"/>
    <property type="gene ID" value="ENSMUSG00000036251.17"/>
</dbReference>
<dbReference type="Ensembl" id="ENSMUST00000171176.3">
    <property type="protein sequence ID" value="ENSMUSP00000131209.3"/>
    <property type="gene ID" value="ENSMUSG00000036251.17"/>
</dbReference>
<dbReference type="GeneID" id="171382"/>
<dbReference type="KEGG" id="mmu:171382"/>
<dbReference type="UCSC" id="uc029qrk.1">
    <property type="organism name" value="mouse"/>
</dbReference>
<dbReference type="AGR" id="MGI:2181435"/>
<dbReference type="CTD" id="79054"/>
<dbReference type="MGI" id="MGI:2181435">
    <property type="gene designation" value="Trpm8"/>
</dbReference>
<dbReference type="VEuPathDB" id="HostDB:ENSMUSG00000036251"/>
<dbReference type="eggNOG" id="KOG3614">
    <property type="taxonomic scope" value="Eukaryota"/>
</dbReference>
<dbReference type="GeneTree" id="ENSGT00940000160270"/>
<dbReference type="HOGENOM" id="CLU_001390_0_0_1"/>
<dbReference type="InParanoid" id="Q8R4D5"/>
<dbReference type="OMA" id="CCKNESK"/>
<dbReference type="OrthoDB" id="310870at2759"/>
<dbReference type="PhylomeDB" id="Q8R4D5"/>
<dbReference type="TreeFam" id="TF314204"/>
<dbReference type="Reactome" id="R-MMU-3295583">
    <property type="pathway name" value="TRP channels"/>
</dbReference>
<dbReference type="BioGRID-ORCS" id="171382">
    <property type="hits" value="0 hits in 79 CRISPR screens"/>
</dbReference>
<dbReference type="PRO" id="PR:Q8R4D5"/>
<dbReference type="Proteomes" id="UP000000589">
    <property type="component" value="Chromosome 1"/>
</dbReference>
<dbReference type="RNAct" id="Q8R4D5">
    <property type="molecule type" value="protein"/>
</dbReference>
<dbReference type="Bgee" id="ENSMUSG00000036251">
    <property type="expression patterns" value="Expressed in seminiferous tubule of testis and 5 other cell types or tissues"/>
</dbReference>
<dbReference type="GO" id="GO:0009897">
    <property type="term" value="C:external side of plasma membrane"/>
    <property type="evidence" value="ECO:0000314"/>
    <property type="project" value="MGI"/>
</dbReference>
<dbReference type="GO" id="GO:0016020">
    <property type="term" value="C:membrane"/>
    <property type="evidence" value="ECO:0000314"/>
    <property type="project" value="MGI"/>
</dbReference>
<dbReference type="GO" id="GO:0045121">
    <property type="term" value="C:membrane raft"/>
    <property type="evidence" value="ECO:0000314"/>
    <property type="project" value="UniProtKB"/>
</dbReference>
<dbReference type="GO" id="GO:0005886">
    <property type="term" value="C:plasma membrane"/>
    <property type="evidence" value="ECO:0000266"/>
    <property type="project" value="MGI"/>
</dbReference>
<dbReference type="GO" id="GO:0044853">
    <property type="term" value="C:plasma membrane raft"/>
    <property type="evidence" value="ECO:0007669"/>
    <property type="project" value="Ensembl"/>
</dbReference>
<dbReference type="GO" id="GO:0005262">
    <property type="term" value="F:calcium channel activity"/>
    <property type="evidence" value="ECO:0000314"/>
    <property type="project" value="MGI"/>
</dbReference>
<dbReference type="GO" id="GO:0042802">
    <property type="term" value="F:identical protein binding"/>
    <property type="evidence" value="ECO:0000353"/>
    <property type="project" value="MGI"/>
</dbReference>
<dbReference type="GO" id="GO:0005216">
    <property type="term" value="F:monoatomic ion channel activity"/>
    <property type="evidence" value="ECO:0000314"/>
    <property type="project" value="UniProtKB"/>
</dbReference>
<dbReference type="GO" id="GO:0006816">
    <property type="term" value="P:calcium ion transport"/>
    <property type="evidence" value="ECO:0000314"/>
    <property type="project" value="MGI"/>
</dbReference>
<dbReference type="GO" id="GO:0006874">
    <property type="term" value="P:intracellular calcium ion homeostasis"/>
    <property type="evidence" value="ECO:0000314"/>
    <property type="project" value="MGI"/>
</dbReference>
<dbReference type="GO" id="GO:0120162">
    <property type="term" value="P:positive regulation of cold-induced thermogenesis"/>
    <property type="evidence" value="ECO:0000315"/>
    <property type="project" value="YuBioLab"/>
</dbReference>
<dbReference type="GO" id="GO:0009409">
    <property type="term" value="P:response to cold"/>
    <property type="evidence" value="ECO:0000314"/>
    <property type="project" value="MGI"/>
</dbReference>
<dbReference type="GO" id="GO:0009266">
    <property type="term" value="P:response to temperature stimulus"/>
    <property type="evidence" value="ECO:0000314"/>
    <property type="project" value="MGI"/>
</dbReference>
<dbReference type="GO" id="GO:0050955">
    <property type="term" value="P:thermoception"/>
    <property type="evidence" value="ECO:0000314"/>
    <property type="project" value="MGI"/>
</dbReference>
<dbReference type="InterPro" id="IPR005821">
    <property type="entry name" value="Ion_trans_dom"/>
</dbReference>
<dbReference type="InterPro" id="IPR050927">
    <property type="entry name" value="TRPM"/>
</dbReference>
<dbReference type="InterPro" id="IPR041491">
    <property type="entry name" value="TRPM_SLOG"/>
</dbReference>
<dbReference type="PANTHER" id="PTHR13800:SF9">
    <property type="entry name" value="TRANSIENT RECEPTOR POTENTIAL CATION CHANNEL SUBFAMILY M MEMBER 8"/>
    <property type="match status" value="1"/>
</dbReference>
<dbReference type="PANTHER" id="PTHR13800">
    <property type="entry name" value="TRANSIENT RECEPTOR POTENTIAL CATION CHANNEL, SUBFAMILY M, MEMBER 6"/>
    <property type="match status" value="1"/>
</dbReference>
<dbReference type="Pfam" id="PF00520">
    <property type="entry name" value="Ion_trans"/>
    <property type="match status" value="1"/>
</dbReference>
<dbReference type="Pfam" id="PF18139">
    <property type="entry name" value="LSDAT_euk"/>
    <property type="match status" value="1"/>
</dbReference>
<dbReference type="Pfam" id="PF25508">
    <property type="entry name" value="TRPM2"/>
    <property type="match status" value="1"/>
</dbReference>
<reference key="1">
    <citation type="journal article" date="2002" name="Cell">
        <title>A TRP channel that senses cold stimuli and menthol.</title>
        <authorList>
            <person name="Peier A.M."/>
            <person name="Moqrich A."/>
            <person name="Hergarden A.C."/>
            <person name="Reeve A.J."/>
            <person name="Andersson D.A."/>
            <person name="Story G.M."/>
            <person name="Earley T.J."/>
            <person name="Dragoni I."/>
            <person name="McIntyre P."/>
            <person name="Bevan S."/>
            <person name="Patapoutian A."/>
        </authorList>
    </citation>
    <scope>NUCLEOTIDE SEQUENCE [MRNA]</scope>
    <scope>FUNCTION</scope>
    <scope>TISSUE SPECIFICITY</scope>
    <scope>TRANSPORTER ACTIVITY</scope>
    <scope>ACTIVITY REGULATION</scope>
    <source>
        <strain>C57BL/6J</strain>
        <tissue>Spinal ganglion</tissue>
    </source>
</reference>
<reference key="2">
    <citation type="submission" date="2002-04" db="EMBL/GenBank/DDBJ databases">
        <title>The murine homologue of TRPM8(Trpp8) gene: cloning, sequencing and tissue distribution.</title>
        <authorList>
            <person name="Tsavaler L."/>
            <person name="Laus R."/>
        </authorList>
    </citation>
    <scope>NUCLEOTIDE SEQUENCE [MRNA]</scope>
    <source>
        <tissue>Testis</tissue>
    </source>
</reference>
<reference key="3">
    <citation type="journal article" date="2009" name="PLoS Biol.">
        <title>Lineage-specific biology revealed by a finished genome assembly of the mouse.</title>
        <authorList>
            <person name="Church D.M."/>
            <person name="Goodstadt L."/>
            <person name="Hillier L.W."/>
            <person name="Zody M.C."/>
            <person name="Goldstein S."/>
            <person name="She X."/>
            <person name="Bult C.J."/>
            <person name="Agarwala R."/>
            <person name="Cherry J.L."/>
            <person name="DiCuccio M."/>
            <person name="Hlavina W."/>
            <person name="Kapustin Y."/>
            <person name="Meric P."/>
            <person name="Maglott D."/>
            <person name="Birtle Z."/>
            <person name="Marques A.C."/>
            <person name="Graves T."/>
            <person name="Zhou S."/>
            <person name="Teague B."/>
            <person name="Potamousis K."/>
            <person name="Churas C."/>
            <person name="Place M."/>
            <person name="Herschleb J."/>
            <person name="Runnheim R."/>
            <person name="Forrest D."/>
            <person name="Amos-Landgraf J."/>
            <person name="Schwartz D.C."/>
            <person name="Cheng Z."/>
            <person name="Lindblad-Toh K."/>
            <person name="Eichler E.E."/>
            <person name="Ponting C.P."/>
        </authorList>
    </citation>
    <scope>NUCLEOTIDE SEQUENCE [LARGE SCALE GENOMIC DNA]</scope>
    <source>
        <strain>C57BL/6J</strain>
    </source>
</reference>
<reference key="4">
    <citation type="submission" date="2005-09" db="EMBL/GenBank/DDBJ databases">
        <authorList>
            <person name="Mural R.J."/>
            <person name="Adams M.D."/>
            <person name="Myers E.W."/>
            <person name="Smith H.O."/>
            <person name="Venter J.C."/>
        </authorList>
    </citation>
    <scope>NUCLEOTIDE SEQUENCE [LARGE SCALE GENOMIC DNA]</scope>
</reference>
<reference key="5">
    <citation type="journal article" date="2004" name="Genome Res.">
        <title>The status, quality, and expansion of the NIH full-length cDNA project: the Mammalian Gene Collection (MGC).</title>
        <authorList>
            <consortium name="The MGC Project Team"/>
        </authorList>
    </citation>
    <scope>NUCLEOTIDE SEQUENCE [LARGE SCALE MRNA]</scope>
</reference>
<reference key="6">
    <citation type="submission" date="2009-01" db="UniProtKB">
        <authorList>
            <person name="Lubec G."/>
            <person name="Sunyer B."/>
            <person name="Chen W.-Q."/>
        </authorList>
    </citation>
    <scope>PROTEIN SEQUENCE OF 168-175</scope>
    <scope>IDENTIFICATION BY MASS SPECTROMETRY</scope>
    <source>
        <strain>OF1</strain>
        <tissue>Hippocampus</tissue>
    </source>
</reference>
<reference key="7">
    <citation type="journal article" date="2003" name="Cell">
        <title>ANKTM1, a TRP-like channel expressed in nociceptive neurons, is activated by cold temperatures.</title>
        <authorList>
            <person name="Story G.M."/>
            <person name="Peier A.M."/>
            <person name="Reeve A.J."/>
            <person name="Eid S.R."/>
            <person name="Mosbacher J."/>
            <person name="Hricik T.R."/>
            <person name="Earley T.J."/>
            <person name="Hergarden A.C."/>
            <person name="Anderson D.A."/>
            <person name="Hwang S.W."/>
            <person name="McIntyre P."/>
            <person name="Jegla T."/>
            <person name="Bevan S."/>
            <person name="Patapoutian A."/>
        </authorList>
    </citation>
    <scope>FUNCTION</scope>
    <scope>TRANSPORTER ACTIVITY</scope>
    <scope>ACTIVITY REGULATION</scope>
    <scope>TISSUE SPECIFICITY</scope>
</reference>
<reference key="8">
    <citation type="journal article" date="2004" name="J. Neurosci.">
        <title>TRPM8 activation by menthol, icilin, and cold is differentially modulated by intracellular pH.</title>
        <authorList>
            <person name="Andersson D.A."/>
            <person name="Chase H.W."/>
            <person name="Bevan S."/>
        </authorList>
    </citation>
    <scope>FUNCTION</scope>
    <scope>TRANSPORTER ACTIVITY</scope>
    <scope>ACTIVITY REGULATION</scope>
</reference>
<reference key="9">
    <citation type="journal article" date="2006" name="J. Biol. Chem.">
        <title>The cold and menthol receptor TRPM8 contains a functionally important double cysteine motif.</title>
        <authorList>
            <person name="Dragoni I."/>
            <person name="Guida E."/>
            <person name="McIntyre P."/>
        </authorList>
    </citation>
    <scope>SUBUNIT</scope>
    <scope>SUBCELLULAR LOCATION</scope>
    <scope>GLYCOSYLATION AT ASN-934</scope>
    <scope>MUTAGENESIS OF ASN-821; CYS-929; ASN-934 AND CYS-940</scope>
</reference>
<reference key="10">
    <citation type="journal article" date="2007" name="Neuron">
        <title>TRPM8 is required for cold sensation in mice.</title>
        <authorList>
            <person name="Dhaka A."/>
            <person name="Murray A.N."/>
            <person name="Mathur J."/>
            <person name="Earley T.J."/>
            <person name="Petrus M.J."/>
            <person name="Patapoutian A."/>
        </authorList>
    </citation>
    <scope>DISRUPTION PHENOTYPE</scope>
    <scope>FUNCTION</scope>
    <scope>ACTIVITY REGULATION</scope>
</reference>
<reference key="11">
    <citation type="journal article" date="2009" name="J. Biol. Chem.">
        <title>Lipid raft segregation modulates TRPM8 channel activity.</title>
        <authorList>
            <person name="Morenilla-Palao C."/>
            <person name="Pertusa M."/>
            <person name="Meseguer V."/>
            <person name="Cabedo H."/>
            <person name="Viana F."/>
        </authorList>
    </citation>
    <scope>SUBCELLULAR LOCATION</scope>
    <scope>GLYCOSYLATION AT ASN-934</scope>
    <scope>MUTAGENESIS OF ASN-934</scope>
</reference>
<reference key="12">
    <citation type="journal article" date="2012" name="J. Biol. Chem.">
        <title>N-glycosylation of TRPM8 ion channels modulates temperature sensitivity of cold thermoreceptor neurons.</title>
        <authorList>
            <person name="Pertusa M."/>
            <person name="Madrid R."/>
            <person name="Morenilla-Palao C."/>
            <person name="Belmonte C."/>
            <person name="Viana F."/>
        </authorList>
    </citation>
    <scope>ROLE OF GLYCOSYLATION IN CHANNEL ACTIVITY</scope>
    <scope>MUTAGENESIS OF ASN-934</scope>
</reference>
<reference key="13">
    <citation type="journal article" date="2015" name="Nat. Commun.">
        <title>TRPM8 is a neuronal osmosensor that regulates eye blinking in mice.</title>
        <authorList>
            <person name="Quallo T."/>
            <person name="Vastani N."/>
            <person name="Horridge E."/>
            <person name="Gentry C."/>
            <person name="Parra A."/>
            <person name="Moss S."/>
            <person name="Viana F."/>
            <person name="Belmonte C."/>
            <person name="Andersson D.A."/>
            <person name="Bevan S."/>
        </authorList>
    </citation>
    <scope>FUNCTION</scope>
    <scope>DISRUPTION PHENOTYPE</scope>
    <scope>ACTIVITY REGULATION</scope>
</reference>
<reference evidence="15 16 17 18 19 20" key="14">
    <citation type="journal article" date="2022" name="Nat. Commun.">
        <title>Structures of a mammalian TRPM8 in closed state.</title>
        <authorList>
            <person name="Zhao C."/>
            <person name="Xie Y."/>
            <person name="Xu L."/>
            <person name="Ye F."/>
            <person name="Xu X."/>
            <person name="Yang W."/>
            <person name="Yang F."/>
            <person name="Guo J."/>
        </authorList>
    </citation>
    <scope>STRUCTURE BY ELECTRON MICROSCOPY (2.52 ANGSTROMS) IN COMPLEX WITH CALCIUM; ICILIN AND PI(4,5)P2</scope>
    <scope>SUBUNIT</scope>
</reference>
<reference evidence="21 22 23 24 25" key="15">
    <citation type="journal article" date="2022" name="Science">
        <title>Activation mechanism of the mouse cold-sensing TRPM8 channel by cooling agonist and PIP2.</title>
        <authorList>
            <person name="Yin Y."/>
            <person name="Zhang F."/>
            <person name="Feng S."/>
            <person name="Butay K.J."/>
            <person name="Borgnia M.J."/>
            <person name="Im W."/>
            <person name="Lee S.Y."/>
        </authorList>
    </citation>
    <scope>STRUCTURE BY ELECTRON MICROSCOPY (3.07 ANGSTROMS) OF 2-1104</scope>
    <scope>SUBUNIT</scope>
</reference>
<feature type="chain" id="PRO_0000215334" description="Transient receptor potential cation channel subfamily M member 8">
    <location>
        <begin position="1"/>
        <end position="1104"/>
    </location>
</feature>
<feature type="topological domain" description="Cytoplasmic" evidence="14">
    <location>
        <begin position="1"/>
        <end position="733"/>
    </location>
</feature>
<feature type="transmembrane region" description="Helical; Name=1" evidence="12 19">
    <location>
        <begin position="734"/>
        <end position="758"/>
    </location>
</feature>
<feature type="topological domain" description="Extracellular" evidence="14">
    <location>
        <begin position="759"/>
        <end position="765"/>
    </location>
</feature>
<feature type="transmembrane region" description="Helical; Name=2" evidence="12 19">
    <location>
        <begin position="766"/>
        <end position="789"/>
    </location>
</feature>
<feature type="topological domain" description="Cytoplasmic" evidence="14">
    <location>
        <begin position="790"/>
        <end position="796"/>
    </location>
</feature>
<feature type="transmembrane region" description="Helical; Name=3" evidence="12 19">
    <location>
        <begin position="797"/>
        <end position="817"/>
    </location>
</feature>
<feature type="topological domain" description="Extracellular" evidence="14">
    <location>
        <begin position="818"/>
        <end position="822"/>
    </location>
</feature>
<feature type="transmembrane region" description="Helical; Name=4" evidence="12 19">
    <location>
        <begin position="823"/>
        <end position="848"/>
    </location>
</feature>
<feature type="topological domain" description="Cytoplasmic" evidence="14">
    <location>
        <begin position="849"/>
        <end position="853"/>
    </location>
</feature>
<feature type="transmembrane region" description="Helical; Name=5" evidence="12 19">
    <location>
        <begin position="854"/>
        <end position="890"/>
    </location>
</feature>
<feature type="topological domain" description="Extracellular" evidence="14">
    <location>
        <begin position="891"/>
        <end position="895"/>
    </location>
</feature>
<feature type="intramembrane region" description="Pore-forming" evidence="12 19">
    <location>
        <begin position="896"/>
        <end position="912"/>
    </location>
</feature>
<feature type="topological domain" description="Extracellular" evidence="14">
    <location>
        <begin position="913"/>
        <end position="953"/>
    </location>
</feature>
<feature type="transmembrane region" description="Helical; Name=6" evidence="12 19">
    <location>
        <begin position="954"/>
        <end position="984"/>
    </location>
</feature>
<feature type="topological domain" description="Cytoplasmic" evidence="14">
    <location>
        <begin position="985"/>
        <end position="1104"/>
    </location>
</feature>
<feature type="region of interest" description="Disordered" evidence="3">
    <location>
        <begin position="1"/>
        <end position="22"/>
    </location>
</feature>
<feature type="coiled-coil region" evidence="2">
    <location>
        <begin position="1069"/>
        <end position="1104"/>
    </location>
</feature>
<feature type="binding site" evidence="12 16">
    <location>
        <position position="782"/>
    </location>
    <ligand>
        <name>Ca(2+)</name>
        <dbReference type="ChEBI" id="CHEBI:29108"/>
    </ligand>
</feature>
<feature type="binding site" evidence="12 16">
    <location>
        <position position="785"/>
    </location>
    <ligand>
        <name>Ca(2+)</name>
        <dbReference type="ChEBI" id="CHEBI:29108"/>
    </ligand>
</feature>
<feature type="binding site" evidence="12 16 17">
    <location>
        <position position="799"/>
    </location>
    <ligand>
        <name>Ca(2+)</name>
        <dbReference type="ChEBI" id="CHEBI:29108"/>
    </ligand>
</feature>
<feature type="binding site" evidence="12 17">
    <location>
        <position position="802"/>
    </location>
    <ligand>
        <name>Ca(2+)</name>
        <dbReference type="ChEBI" id="CHEBI:29108"/>
    </ligand>
</feature>
<feature type="glycosylation site" description="N-linked (GlcNAc...) (complex) asparagine" evidence="7 9">
    <location>
        <position position="934"/>
    </location>
</feature>
<feature type="mutagenesis site" description="No effect on glycosylation or ability to form functional channels." evidence="7">
    <original>N</original>
    <variation>Q</variation>
    <location>
        <position position="821"/>
    </location>
</feature>
<feature type="mutagenesis site" description="Abolishes ion channel activity. No effect on cell surface expression. Reduced glycosylation." evidence="7">
    <original>C</original>
    <variation>A</variation>
    <location>
        <position position="929"/>
    </location>
</feature>
<feature type="mutagenesis site" description="Slighty reduced ion channel sensitivity to cold stimuli. No significant effect on ion channel sensitivity to menthol plus cold stimuli." evidence="7 9 10">
    <original>N</original>
    <variation>D</variation>
    <location>
        <position position="934"/>
    </location>
</feature>
<feature type="mutagenesis site" description="Reduced ion channel sensitivity to cold stimuli or menthol plus cold stimuli." evidence="7 9 10">
    <original>N</original>
    <variation>K</variation>
    <location>
        <position position="934"/>
    </location>
</feature>
<feature type="mutagenesis site" description="Abolishes glycosylation. Shifts threshold of temperature activation from 26.5 to 24 degrees Celsius. Reduced cell surface expression, association with lipid rafts and response to cold." evidence="7 9 10">
    <original>N</original>
    <variation>Q</variation>
    <location>
        <position position="934"/>
    </location>
</feature>
<feature type="mutagenesis site" description="Abolishes ion channel activity. No effect on cell surface expression. Reduced glycosylation." evidence="7">
    <original>C</original>
    <variation>A</variation>
    <location>
        <position position="940"/>
    </location>
</feature>
<feature type="helix" evidence="32">
    <location>
        <begin position="41"/>
        <end position="48"/>
    </location>
</feature>
<feature type="strand" evidence="26">
    <location>
        <begin position="105"/>
        <end position="107"/>
    </location>
</feature>
<feature type="strand" evidence="28">
    <location>
        <begin position="118"/>
        <end position="121"/>
    </location>
</feature>
<feature type="helix" evidence="28">
    <location>
        <begin position="126"/>
        <end position="135"/>
    </location>
</feature>
<feature type="strand" evidence="28">
    <location>
        <begin position="142"/>
        <end position="148"/>
    </location>
</feature>
<feature type="strand" evidence="32">
    <location>
        <begin position="151"/>
        <end position="153"/>
    </location>
</feature>
<feature type="helix" evidence="28">
    <location>
        <begin position="159"/>
        <end position="175"/>
    </location>
</feature>
<feature type="strand" evidence="28">
    <location>
        <begin position="177"/>
        <end position="181"/>
    </location>
</feature>
<feature type="strand" evidence="28">
    <location>
        <begin position="184"/>
        <end position="186"/>
    </location>
</feature>
<feature type="helix" evidence="28">
    <location>
        <begin position="188"/>
        <end position="203"/>
    </location>
</feature>
<feature type="strand" evidence="28">
    <location>
        <begin position="210"/>
        <end position="215"/>
    </location>
</feature>
<feature type="strand" evidence="28">
    <location>
        <begin position="217"/>
        <end position="219"/>
    </location>
</feature>
<feature type="strand" evidence="28">
    <location>
        <begin position="258"/>
        <end position="264"/>
    </location>
</feature>
<feature type="strand" evidence="26">
    <location>
        <begin position="266"/>
        <end position="268"/>
    </location>
</feature>
<feature type="helix" evidence="28">
    <location>
        <begin position="275"/>
        <end position="287"/>
    </location>
</feature>
<feature type="strand" evidence="28">
    <location>
        <begin position="291"/>
        <end position="298"/>
    </location>
</feature>
<feature type="strand" evidence="28">
    <location>
        <begin position="301"/>
        <end position="305"/>
    </location>
</feature>
<feature type="helix" evidence="28">
    <location>
        <begin position="310"/>
        <end position="321"/>
    </location>
</feature>
<feature type="strand" evidence="27">
    <location>
        <begin position="322"/>
        <end position="324"/>
    </location>
</feature>
<feature type="strand" evidence="28">
    <location>
        <begin position="327"/>
        <end position="329"/>
    </location>
</feature>
<feature type="strand" evidence="28">
    <location>
        <begin position="331"/>
        <end position="334"/>
    </location>
</feature>
<feature type="helix" evidence="28">
    <location>
        <begin position="335"/>
        <end position="340"/>
    </location>
</feature>
<feature type="helix" evidence="28">
    <location>
        <begin position="351"/>
        <end position="361"/>
    </location>
</feature>
<feature type="turn" evidence="28">
    <location>
        <begin position="363"/>
        <end position="365"/>
    </location>
</feature>
<feature type="helix" evidence="28">
    <location>
        <begin position="366"/>
        <end position="368"/>
    </location>
</feature>
<feature type="helix" evidence="28">
    <location>
        <begin position="371"/>
        <end position="384"/>
    </location>
</feature>
<feature type="turn" evidence="32">
    <location>
        <begin position="388"/>
        <end position="390"/>
    </location>
</feature>
<feature type="strand" evidence="28">
    <location>
        <begin position="391"/>
        <end position="393"/>
    </location>
</feature>
<feature type="strand" evidence="28">
    <location>
        <begin position="400"/>
        <end position="402"/>
    </location>
</feature>
<feature type="helix" evidence="28">
    <location>
        <begin position="403"/>
        <end position="417"/>
    </location>
</feature>
<feature type="strand" evidence="32">
    <location>
        <begin position="420"/>
        <end position="422"/>
    </location>
</feature>
<feature type="helix" evidence="28">
    <location>
        <begin position="426"/>
        <end position="435"/>
    </location>
</feature>
<feature type="helix" evidence="28">
    <location>
        <begin position="439"/>
        <end position="445"/>
    </location>
</feature>
<feature type="strand" evidence="28">
    <location>
        <begin position="447"/>
        <end position="449"/>
    </location>
</feature>
<feature type="helix" evidence="32">
    <location>
        <begin position="456"/>
        <end position="458"/>
    </location>
</feature>
<feature type="helix" evidence="28">
    <location>
        <begin position="459"/>
        <end position="467"/>
    </location>
</feature>
<feature type="helix" evidence="28">
    <location>
        <begin position="471"/>
        <end position="480"/>
    </location>
</feature>
<feature type="helix" evidence="28">
    <location>
        <begin position="484"/>
        <end position="487"/>
    </location>
</feature>
<feature type="helix" evidence="28">
    <location>
        <begin position="490"/>
        <end position="498"/>
    </location>
</feature>
<feature type="helix" evidence="28">
    <location>
        <begin position="503"/>
        <end position="515"/>
    </location>
</feature>
<feature type="helix" evidence="28">
    <location>
        <begin position="519"/>
        <end position="531"/>
    </location>
</feature>
<feature type="helix" evidence="28">
    <location>
        <begin position="560"/>
        <end position="570"/>
    </location>
</feature>
<feature type="helix" evidence="28">
    <location>
        <begin position="576"/>
        <end position="581"/>
    </location>
</feature>
<feature type="strand" evidence="29">
    <location>
        <begin position="584"/>
        <end position="586"/>
    </location>
</feature>
<feature type="helix" evidence="28">
    <location>
        <begin position="587"/>
        <end position="601"/>
    </location>
</feature>
<feature type="strand" evidence="26">
    <location>
        <begin position="605"/>
        <end position="607"/>
    </location>
</feature>
<feature type="helix" evidence="28">
    <location>
        <begin position="608"/>
        <end position="635"/>
    </location>
</feature>
<feature type="helix" evidence="28">
    <location>
        <begin position="638"/>
        <end position="643"/>
    </location>
</feature>
<feature type="turn" evidence="28">
    <location>
        <begin position="648"/>
        <end position="650"/>
    </location>
</feature>
<feature type="strand" evidence="28">
    <location>
        <begin position="651"/>
        <end position="654"/>
    </location>
</feature>
<feature type="helix" evidence="28">
    <location>
        <begin position="656"/>
        <end position="662"/>
    </location>
</feature>
<feature type="helix" evidence="28">
    <location>
        <begin position="666"/>
        <end position="669"/>
    </location>
</feature>
<feature type="helix" evidence="28">
    <location>
        <begin position="672"/>
        <end position="683"/>
    </location>
</feature>
<feature type="strand" evidence="28">
    <location>
        <begin position="688"/>
        <end position="690"/>
    </location>
</feature>
<feature type="helix" evidence="28">
    <location>
        <begin position="692"/>
        <end position="700"/>
    </location>
</feature>
<feature type="helix" evidence="28">
    <location>
        <begin position="702"/>
        <end position="705"/>
    </location>
</feature>
<feature type="turn" evidence="32">
    <location>
        <begin position="706"/>
        <end position="709"/>
    </location>
</feature>
<feature type="helix" evidence="28">
    <location>
        <begin position="724"/>
        <end position="730"/>
    </location>
</feature>
<feature type="helix" evidence="28">
    <location>
        <begin position="734"/>
        <end position="758"/>
    </location>
</feature>
<feature type="strand" evidence="29">
    <location>
        <begin position="761"/>
        <end position="763"/>
    </location>
</feature>
<feature type="helix" evidence="28">
    <location>
        <begin position="766"/>
        <end position="787"/>
    </location>
</feature>
<feature type="turn" evidence="28">
    <location>
        <begin position="788"/>
        <end position="791"/>
    </location>
</feature>
<feature type="helix" evidence="28">
    <location>
        <begin position="792"/>
        <end position="795"/>
    </location>
</feature>
<feature type="helix" evidence="28">
    <location>
        <begin position="797"/>
        <end position="816"/>
    </location>
</feature>
<feature type="helix" evidence="28">
    <location>
        <begin position="822"/>
        <end position="846"/>
    </location>
</feature>
<feature type="helix" evidence="28">
    <location>
        <begin position="847"/>
        <end position="849"/>
    </location>
</feature>
<feature type="strand" evidence="28">
    <location>
        <begin position="850"/>
        <end position="852"/>
    </location>
</feature>
<feature type="helix" evidence="28">
    <location>
        <begin position="853"/>
        <end position="859"/>
    </location>
</feature>
<feature type="helix" evidence="28">
    <location>
        <begin position="860"/>
        <end position="863"/>
    </location>
</feature>
<feature type="helix" evidence="28">
    <location>
        <begin position="864"/>
        <end position="889"/>
    </location>
</feature>
<feature type="helix" evidence="28">
    <location>
        <begin position="896"/>
        <end position="903"/>
    </location>
</feature>
<feature type="helix" evidence="28">
    <location>
        <begin position="905"/>
        <end position="909"/>
    </location>
</feature>
<feature type="helix" evidence="28">
    <location>
        <begin position="910"/>
        <end position="912"/>
    </location>
</feature>
<feature type="helix" evidence="31">
    <location>
        <begin position="916"/>
        <end position="920"/>
    </location>
</feature>
<feature type="strand" evidence="28">
    <location>
        <begin position="921"/>
        <end position="923"/>
    </location>
</feature>
<feature type="helix" evidence="28">
    <location>
        <begin position="926"/>
        <end position="928"/>
    </location>
</feature>
<feature type="strand" evidence="28">
    <location>
        <begin position="931"/>
        <end position="933"/>
    </location>
</feature>
<feature type="strand" evidence="28">
    <location>
        <begin position="935"/>
        <end position="937"/>
    </location>
</feature>
<feature type="strand" evidence="32">
    <location>
        <begin position="947"/>
        <end position="949"/>
    </location>
</feature>
<feature type="helix" evidence="28">
    <location>
        <begin position="953"/>
        <end position="968"/>
    </location>
</feature>
<feature type="helix" evidence="28">
    <location>
        <begin position="970"/>
        <end position="1005"/>
    </location>
</feature>
<feature type="strand" evidence="28">
    <location>
        <begin position="1006"/>
        <end position="1008"/>
    </location>
</feature>
<feature type="turn" evidence="28">
    <location>
        <begin position="1013"/>
        <end position="1015"/>
    </location>
</feature>
<feature type="helix" evidence="28">
    <location>
        <begin position="1016"/>
        <end position="1026"/>
    </location>
</feature>
<feature type="turn" evidence="28">
    <location>
        <begin position="1027"/>
        <end position="1029"/>
    </location>
</feature>
<feature type="helix" evidence="28">
    <location>
        <begin position="1047"/>
        <end position="1069"/>
    </location>
</feature>
<feature type="helix" evidence="30">
    <location>
        <begin position="1070"/>
        <end position="1073"/>
    </location>
</feature>
<feature type="helix" evidence="28">
    <location>
        <begin position="1075"/>
        <end position="1103"/>
    </location>
</feature>
<gene>
    <name type="primary">Trpm8</name>
    <name type="synonym">Ltrpc6</name>
    <name type="synonym">Trpp8</name>
</gene>
<sequence>MSFEGARLSMRSRRNGTMGSTRTLYSSVSRSTDVSYSDSDLVNFIQANFKKRECVFFTRDSKAMENICKCGYAQSQHIEGTQINQNEKWNYKKHTKEFPTDAFGDIQFETLGKKGKYLRLSCDTDSETLYELLTQHWHLKTPNLVISVTGGAKNFALKPRMRKIFSRLIYIAQSKGAWILTGGTHYGLMKYIGEVVRDNTISRNSEENIVAIGIAAWGMVSNRDTLIRSCDDEGHFSAQYIMDDFTRDPLYILDNNHTHLLLVDNGCHGHPTVEAKLRNQLEKYISERTSQDSNYGGKIPIVCFAQGGGRETLKAINTSVKSKIPCVVVEGSGQIADVIASLVEVEDVLTSSMVKEKLVRFLPRTVSRLPEEEIESWIKWLKEILESSHLLTVIKMEEAGDEIVSNAISYALYKAFSTNEQDKDNWNGQLKLLLEWNQLDLASDEIFTNDRRWESADLQEVMFTALIKDRPKFVRLFLENGLNLQKFLTNEVLTELFSTHFSTLVYRNLQIAKNSYNDALLTFVWKLVANFRRSFWKEDRSSREDLDVELHDASLTTRHPLQALFIWAILQNKKELSKVIWEQTKGCTLAALGASKLLKTLAKVKNDINAAGESEELANEYETRAVELFTECYSNDEDLAEQLLVYSCEAWGGSNCLELAVEATDQHFIAQPGVQNFLSKQWYGEISRDTKNWKIILCLFIIPLVGCGLVSFRKKPIDKHKKLLWYYVAFFTSPFVVFSWNVVFYIAFLLLFAYVLLMDFHSVPHTPELILYALVFVLFCDEVRQWYMNGVNYFTDLWNVMDTLGLFYFIAGIVFRLHSSNKSSLYSGRVIFCLDYIIFTLRLIHIFTVSRNLGPKIIMLQRMLIDVFFFLFLFAVWMVAFGVARQGILRQNEQRWRWIFRSVIYEPYLAMFGQVPSDVDSTTYDFSHCTFSGNESKPLCVELDEHNLPRFPEWITIPLVCIYMLSTNILLVNLLVAMFGYTVGIVQENNDQVWKFQRYFLVQEYCNRLNIPFPFVVFAYFYMVVKKCFKCCCKEKNMESNACCFRNEDNETLAWEGVMKENYLVKINTKANDNSEEMRHRFRQLDSKLNDLKSLLKEIANNIK</sequence>
<protein>
    <recommendedName>
        <fullName>Transient receptor potential cation channel subfamily M member 8</fullName>
    </recommendedName>
    <alternativeName>
        <fullName>Long transient receptor potential channel 6</fullName>
        <shortName>LTrpC-6</shortName>
        <shortName>LTrpC6</shortName>
    </alternativeName>
    <alternativeName>
        <fullName>Transient receptor potential p8</fullName>
        <shortName>Trp-p8</shortName>
    </alternativeName>
</protein>
<organism>
    <name type="scientific">Mus musculus</name>
    <name type="common">Mouse</name>
    <dbReference type="NCBI Taxonomy" id="10090"/>
    <lineage>
        <taxon>Eukaryota</taxon>
        <taxon>Metazoa</taxon>
        <taxon>Chordata</taxon>
        <taxon>Craniata</taxon>
        <taxon>Vertebrata</taxon>
        <taxon>Euteleostomi</taxon>
        <taxon>Mammalia</taxon>
        <taxon>Eutheria</taxon>
        <taxon>Euarchontoglires</taxon>
        <taxon>Glires</taxon>
        <taxon>Rodentia</taxon>
        <taxon>Myomorpha</taxon>
        <taxon>Muroidea</taxon>
        <taxon>Muridae</taxon>
        <taxon>Murinae</taxon>
        <taxon>Mus</taxon>
        <taxon>Mus</taxon>
    </lineage>
</organism>
<proteinExistence type="evidence at protein level"/>
<comment type="function">
    <text evidence="1 4 5 6 8 11">Non-selective ion channel permeable to monovalent and divalent cations, including Na(+), K(+), and Ca(2+), with higher permeability for Ca(2+) (PubMed:11893340, PubMed:12654248, PubMed:15190109). Activated by multiple factors, such as temperature, voltage, pressure, and changes in osmolality (PubMed:12654248, PubMed:15190109, PubMed:25998021). Activated by cool temperatures (&lt;23-28 degrees Celsius) and by chemical ligands evoking a sensation of coolness, such as menthol and icilin, therefore plays a central role in the detection of environmental cold temperatures (PubMed:12654248, PubMed:15190109, PubMed:17481391). TRPM8 is a voltage-dependent channel; its activation by cold or chemical ligands shifts its voltage thresholds towards physiological membrane potentials, leading to the opening of the channel (By similarity). In addition to its critical role in temperature sensing, regulates basal tear secretion by sensing evaporation-induced cooling and changes in osmolality (PubMed:25998021).</text>
</comment>
<comment type="catalytic activity">
    <reaction evidence="4 5 6">
        <text>Ca(2+)(in) = Ca(2+)(out)</text>
        <dbReference type="Rhea" id="RHEA:29671"/>
        <dbReference type="ChEBI" id="CHEBI:29108"/>
    </reaction>
</comment>
<comment type="catalytic activity">
    <reaction evidence="4">
        <text>Na(+)(in) = Na(+)(out)</text>
        <dbReference type="Rhea" id="RHEA:34963"/>
        <dbReference type="ChEBI" id="CHEBI:29101"/>
    </reaction>
</comment>
<comment type="catalytic activity">
    <reaction evidence="4">
        <text>K(+)(in) = K(+)(out)</text>
        <dbReference type="Rhea" id="RHEA:29463"/>
        <dbReference type="ChEBI" id="CHEBI:29103"/>
    </reaction>
</comment>
<comment type="activity regulation">
    <text evidence="1 4 5 6 8">Activated by cold temperatures and by both natural and synthetic cooling compounds such as menthol and icilin (PubMed:11893340, PubMed:12654248, PubMed:15190109, PubMed:17481391). Activation of the channel requires the presence of PI(4,5)P2; PI(4,5)P2 is necessary to gate the channel (By similarity). Activated by intracellular Ca(2+) (By similarity).</text>
</comment>
<comment type="subunit">
    <text evidence="1 7 12 13">Homotetramer (PubMed:17015441, PubMed:35662242, PubMed:36227998). Interacts (via N-terminus and C-terminus domains) with TCAF1; the interaction stimulates TRPM8 channel activity. Interacts (via N-terminus and C-terminus domains) with TCAF2; the interaction inhibits TRPM8 channel activity (By similarity).</text>
</comment>
<comment type="subcellular location">
    <subcellularLocation>
        <location evidence="7">Cell membrane</location>
        <topology evidence="12">Multi-pass membrane protein</topology>
    </subcellularLocation>
    <subcellularLocation>
        <location evidence="9">Membrane raft</location>
    </subcellularLocation>
    <text evidence="9">Lipid raft association modulates TRPM8 channel activity.</text>
</comment>
<comment type="tissue specificity">
    <text evidence="4 5">Expressed in dorsal root and trigeminal ganglia. Specifically expressed in a subset of pain- and temperature-sensing neurons. Not expressed in heavily myelinated neurons. Not expressed in neurons expressing TRPA1 or TRPV1.</text>
</comment>
<comment type="domain">
    <text evidence="12">Cooling agents bind within a pocket formed entirely by the S1-S4 helices that opens to the cytoplasm.</text>
</comment>
<comment type="domain">
    <text evidence="1">The coiled coil region is required for multimerization.</text>
</comment>
<comment type="PTM">
    <text evidence="7 9">N-glycosylation is not essential for but facilitates cell surface expression, multimerization, association with lipid rafts and ion channel activity.</text>
</comment>
<comment type="disruption phenotype">
    <text evidence="8">Trpm8-deficient mice have severe behavioral deficits in response to cold stimuli.</text>
</comment>
<comment type="similarity">
    <text evidence="14">Belongs to the transient receptor (TC 1.A.4) family. LTrpC subfamily. TRPM8 sub-subfamily.</text>
</comment>
<name>TRPM8_MOUSE</name>
<evidence type="ECO:0000250" key="1">
    <source>
        <dbReference type="UniProtKB" id="Q7Z2W7"/>
    </source>
</evidence>
<evidence type="ECO:0000255" key="2"/>
<evidence type="ECO:0000256" key="3">
    <source>
        <dbReference type="SAM" id="MobiDB-lite"/>
    </source>
</evidence>
<evidence type="ECO:0000269" key="4">
    <source>
    </source>
</evidence>
<evidence type="ECO:0000269" key="5">
    <source>
    </source>
</evidence>
<evidence type="ECO:0000269" key="6">
    <source>
    </source>
</evidence>
<evidence type="ECO:0000269" key="7">
    <source>
    </source>
</evidence>
<evidence type="ECO:0000269" key="8">
    <source>
    </source>
</evidence>
<evidence type="ECO:0000269" key="9">
    <source>
    </source>
</evidence>
<evidence type="ECO:0000269" key="10">
    <source>
    </source>
</evidence>
<evidence type="ECO:0000269" key="11">
    <source>
    </source>
</evidence>
<evidence type="ECO:0000269" key="12">
    <source>
    </source>
</evidence>
<evidence type="ECO:0000269" key="13">
    <source>
    </source>
</evidence>
<evidence type="ECO:0000305" key="14"/>
<evidence type="ECO:0007744" key="15">
    <source>
        <dbReference type="PDB" id="7WRA"/>
    </source>
</evidence>
<evidence type="ECO:0007744" key="16">
    <source>
        <dbReference type="PDB" id="7WRB"/>
    </source>
</evidence>
<evidence type="ECO:0007744" key="17">
    <source>
        <dbReference type="PDB" id="7WRC"/>
    </source>
</evidence>
<evidence type="ECO:0007744" key="18">
    <source>
        <dbReference type="PDB" id="7WRD"/>
    </source>
</evidence>
<evidence type="ECO:0007744" key="19">
    <source>
        <dbReference type="PDB" id="7WRE"/>
    </source>
</evidence>
<evidence type="ECO:0007744" key="20">
    <source>
        <dbReference type="PDB" id="7WRF"/>
    </source>
</evidence>
<evidence type="ECO:0007744" key="21">
    <source>
        <dbReference type="PDB" id="8E4L"/>
    </source>
</evidence>
<evidence type="ECO:0007744" key="22">
    <source>
        <dbReference type="PDB" id="8E4M"/>
    </source>
</evidence>
<evidence type="ECO:0007744" key="23">
    <source>
        <dbReference type="PDB" id="8E4N"/>
    </source>
</evidence>
<evidence type="ECO:0007744" key="24">
    <source>
        <dbReference type="PDB" id="8E4O"/>
    </source>
</evidence>
<evidence type="ECO:0007744" key="25">
    <source>
        <dbReference type="PDB" id="8E4P"/>
    </source>
</evidence>
<evidence type="ECO:0007829" key="26">
    <source>
        <dbReference type="PDB" id="7WRB"/>
    </source>
</evidence>
<evidence type="ECO:0007829" key="27">
    <source>
        <dbReference type="PDB" id="7WRD"/>
    </source>
</evidence>
<evidence type="ECO:0007829" key="28">
    <source>
        <dbReference type="PDB" id="7WRE"/>
    </source>
</evidence>
<evidence type="ECO:0007829" key="29">
    <source>
        <dbReference type="PDB" id="8E4L"/>
    </source>
</evidence>
<evidence type="ECO:0007829" key="30">
    <source>
        <dbReference type="PDB" id="8E4M"/>
    </source>
</evidence>
<evidence type="ECO:0007829" key="31">
    <source>
        <dbReference type="PDB" id="8E4N"/>
    </source>
</evidence>
<evidence type="ECO:0007829" key="32">
    <source>
        <dbReference type="PDB" id="9B6G"/>
    </source>
</evidence>
<accession>Q8R4D5</accession>
<accession>E9Q165</accession>
<accession>Q148W9</accession>